<proteinExistence type="inferred from homology"/>
<feature type="chain" id="PRO_0000410740" description="Topoisomerase I damage affected protein 2">
    <location>
        <begin position="1"/>
        <end position="124"/>
    </location>
</feature>
<organism>
    <name type="scientific">Saccharomyces cerevisiae (strain Lalvin QA23)</name>
    <name type="common">Baker's yeast</name>
    <dbReference type="NCBI Taxonomy" id="764098"/>
    <lineage>
        <taxon>Eukaryota</taxon>
        <taxon>Fungi</taxon>
        <taxon>Dikarya</taxon>
        <taxon>Ascomycota</taxon>
        <taxon>Saccharomycotina</taxon>
        <taxon>Saccharomycetes</taxon>
        <taxon>Saccharomycetales</taxon>
        <taxon>Saccharomycetaceae</taxon>
        <taxon>Saccharomyces</taxon>
    </lineage>
</organism>
<name>TDA2_YEASL</name>
<sequence>MQIEIKDGRSDNSPLPERKLVTLIQESYDSLKDDNEINLSTESTSNLLIKLVLEKLEKHSSLYKYIASVTTLNIEGLNEENANFSLKNDIGASWESKKDGIFNYKLEDKNSNECYLITILWLHK</sequence>
<accession>E7KMP1</accession>
<reference key="1">
    <citation type="journal article" date="2011" name="PLoS Genet.">
        <title>Whole-genome comparison reveals novel genetic elements that characterize the genome of industrial strains of Saccharomyces cerevisiae.</title>
        <authorList>
            <person name="Borneman A.R."/>
            <person name="Desany B.A."/>
            <person name="Riches D."/>
            <person name="Affourtit J.P."/>
            <person name="Forgan A.H."/>
            <person name="Pretorius I.S."/>
            <person name="Egholm M."/>
            <person name="Chambers P.J."/>
        </authorList>
    </citation>
    <scope>NUCLEOTIDE SEQUENCE [LARGE SCALE GENOMIC DNA]</scope>
    <source>
        <strain>Lalvin QA23</strain>
    </source>
</reference>
<evidence type="ECO:0000250" key="1">
    <source>
        <dbReference type="UniProtKB" id="P40045"/>
    </source>
</evidence>
<evidence type="ECO:0000305" key="2"/>
<protein>
    <recommendedName>
        <fullName>Topoisomerase I damage affected protein 2</fullName>
    </recommendedName>
</protein>
<keyword id="KW-0966">Cell projection</keyword>
<keyword id="KW-0963">Cytoplasm</keyword>
<gene>
    <name type="primary">TDA2</name>
    <name type="ORF">QA23_1345</name>
</gene>
<comment type="subcellular location">
    <subcellularLocation>
        <location evidence="1">Cytoplasm</location>
    </subcellularLocation>
    <subcellularLocation>
        <location evidence="1">Cell projection</location>
    </subcellularLocation>
    <text evidence="1">Concentrates at cytoplasmic punctate structures and localizes at the mating projection tip.</text>
</comment>
<comment type="similarity">
    <text evidence="2">Belongs to the TDA2 family.</text>
</comment>
<dbReference type="EMBL" id="ADVV01000029">
    <property type="protein sequence ID" value="EGA83126.1"/>
    <property type="molecule type" value="Genomic_DNA"/>
</dbReference>
<dbReference type="SMR" id="E7KMP1"/>
<dbReference type="HOGENOM" id="CLU_137494_1_0_1"/>
<dbReference type="OrthoDB" id="38744at4893"/>
<dbReference type="GO" id="GO:0042995">
    <property type="term" value="C:cell projection"/>
    <property type="evidence" value="ECO:0007669"/>
    <property type="project" value="UniProtKB-SubCell"/>
</dbReference>
<dbReference type="GO" id="GO:0005737">
    <property type="term" value="C:cytoplasm"/>
    <property type="evidence" value="ECO:0007669"/>
    <property type="project" value="UniProtKB-SubCell"/>
</dbReference>
<dbReference type="CDD" id="cd21457">
    <property type="entry name" value="DLC-like_TDA2"/>
    <property type="match status" value="1"/>
</dbReference>
<dbReference type="FunFam" id="3.30.1140.40:FF:000005">
    <property type="entry name" value="Topoisomerase I damage affected protein 2"/>
    <property type="match status" value="1"/>
</dbReference>
<dbReference type="Gene3D" id="3.30.1140.40">
    <property type="entry name" value="Tctex-1"/>
    <property type="match status" value="1"/>
</dbReference>
<dbReference type="InterPro" id="IPR038586">
    <property type="entry name" value="Tctex-1-like_sf"/>
</dbReference>